<comment type="function">
    <text evidence="1 2">Iron binding protein that protects DNA from Fenton chemistry-mediated damage caused by hydrogen peroxide induced oxidative stress (PubMed:26581883). May be involved in iron-sulfur cluster assembly (PubMed:26581883).</text>
</comment>
<comment type="subunit">
    <text evidence="2">Putative homodimer; may be disulfide-linked.</text>
</comment>
<comment type="induction">
    <text evidence="1">Induced by oxidative stress due to hydrogen peroxide.</text>
</comment>
<comment type="disruption phenotype">
    <text evidence="1">Increased sensitivity to hydrogen peroxide (PubMed:26581883). Increased incidence of spontaneous mutation in presence of hydrogen peroxide (PubMed:26581883). Slight reduction in growth rate (PubMed:26581883). No reduction in the ability to accumulate haem on cell surface (PubMed:26581883). No change in Rgp and Kgp proteolytic activity (PubMed:26581883).</text>
</comment>
<comment type="miscellaneous">
    <text evidence="1">The grpE-dnaJ-PG1777-PG1778-PG1779 genes are co-transcribed and may form an operon.</text>
</comment>
<comment type="similarity">
    <text evidence="3">Belongs to the Fe-S cluster assembly domain superfamily. MIP18-like family.</text>
</comment>
<protein>
    <recommendedName>
        <fullName evidence="3">Fe-S protein maturation auxiliary factor PG_1777</fullName>
    </recommendedName>
    <alternativeName>
        <fullName evidence="3">Iron-sulfur cluster assembly protein PG_1777</fullName>
    </alternativeName>
</protein>
<organism evidence="5">
    <name type="scientific">Porphyromonas gingivalis (strain ATCC BAA-308 / W83)</name>
    <dbReference type="NCBI Taxonomy" id="242619"/>
    <lineage>
        <taxon>Bacteria</taxon>
        <taxon>Pseudomonadati</taxon>
        <taxon>Bacteroidota</taxon>
        <taxon>Bacteroidia</taxon>
        <taxon>Bacteroidales</taxon>
        <taxon>Porphyromonadaceae</taxon>
        <taxon>Porphyromonas</taxon>
    </lineage>
</organism>
<sequence length="105" mass="11881">MNNEFLQTEEDIVRMLRTVYDPEIPVNVYDLGLIYNVDVGADGFVTVTMTLTAPNCPAADFIIEDVRMKVESVKGVKGVKIDLTFEPEWNKDMMSEEAMLELGFL</sequence>
<dbReference type="EMBL" id="AE015924">
    <property type="protein sequence ID" value="AAQ66778.1"/>
    <property type="molecule type" value="Genomic_DNA"/>
</dbReference>
<dbReference type="RefSeq" id="WP_004584719.1">
    <property type="nucleotide sequence ID" value="NC_002950.2"/>
</dbReference>
<dbReference type="SMR" id="Q7MTZ9"/>
<dbReference type="STRING" id="242619.PG_1777"/>
<dbReference type="EnsemblBacteria" id="AAQ66778">
    <property type="protein sequence ID" value="AAQ66778"/>
    <property type="gene ID" value="PG_1777"/>
</dbReference>
<dbReference type="KEGG" id="pgi:PG_1777"/>
<dbReference type="eggNOG" id="COG2151">
    <property type="taxonomic scope" value="Bacteria"/>
</dbReference>
<dbReference type="HOGENOM" id="CLU_091588_2_0_10"/>
<dbReference type="Proteomes" id="UP000000588">
    <property type="component" value="Chromosome"/>
</dbReference>
<dbReference type="GO" id="GO:0051536">
    <property type="term" value="F:iron-sulfur cluster binding"/>
    <property type="evidence" value="ECO:0007669"/>
    <property type="project" value="UniProtKB-KW"/>
</dbReference>
<dbReference type="GO" id="GO:0046872">
    <property type="term" value="F:metal ion binding"/>
    <property type="evidence" value="ECO:0007669"/>
    <property type="project" value="UniProtKB-KW"/>
</dbReference>
<dbReference type="Gene3D" id="3.30.300.130">
    <property type="entry name" value="Fe-S cluster assembly (FSCA)"/>
    <property type="match status" value="1"/>
</dbReference>
<dbReference type="InterPro" id="IPR052339">
    <property type="entry name" value="Fe-S_Maturation_MIP18"/>
</dbReference>
<dbReference type="InterPro" id="IPR034904">
    <property type="entry name" value="FSCA_dom_sf"/>
</dbReference>
<dbReference type="InterPro" id="IPR002744">
    <property type="entry name" value="MIP18-like"/>
</dbReference>
<dbReference type="PANTHER" id="PTHR42831">
    <property type="entry name" value="FE-S PROTEIN MATURATION AUXILIARY FACTOR YITW"/>
    <property type="match status" value="1"/>
</dbReference>
<dbReference type="PANTHER" id="PTHR42831:SF1">
    <property type="entry name" value="FE-S PROTEIN MATURATION AUXILIARY FACTOR YITW"/>
    <property type="match status" value="1"/>
</dbReference>
<dbReference type="Pfam" id="PF01883">
    <property type="entry name" value="FeS_assembly_P"/>
    <property type="match status" value="1"/>
</dbReference>
<dbReference type="SUPFAM" id="SSF117916">
    <property type="entry name" value="Fe-S cluster assembly (FSCA) domain-like"/>
    <property type="match status" value="1"/>
</dbReference>
<keyword id="KW-1015">Disulfide bond</keyword>
<keyword id="KW-0408">Iron</keyword>
<keyword id="KW-0411">Iron-sulfur</keyword>
<keyword id="KW-0479">Metal-binding</keyword>
<keyword id="KW-1185">Reference proteome</keyword>
<name>SUFT_PORGI</name>
<gene>
    <name evidence="4" type="ordered locus">PG_1777</name>
</gene>
<proteinExistence type="evidence at protein level"/>
<reference evidence="5" key="1">
    <citation type="journal article" date="2003" name="J. Bacteriol.">
        <title>Complete genome sequence of the oral pathogenic bacterium Porphyromonas gingivalis strain W83.</title>
        <authorList>
            <person name="Nelson K.E."/>
            <person name="Fleischmann R.D."/>
            <person name="DeBoy R.T."/>
            <person name="Paulsen I.T."/>
            <person name="Fouts D.E."/>
            <person name="Eisen J.A."/>
            <person name="Daugherty S.C."/>
            <person name="Dodson R.J."/>
            <person name="Durkin A.S."/>
            <person name="Gwinn M.L."/>
            <person name="Haft D.H."/>
            <person name="Kolonay J.F."/>
            <person name="Nelson W.C."/>
            <person name="Mason T.M."/>
            <person name="Tallon L."/>
            <person name="Gray J."/>
            <person name="Granger D."/>
            <person name="Tettelin H."/>
            <person name="Dong H."/>
            <person name="Galvin J.L."/>
            <person name="Duncan M.J."/>
            <person name="Dewhirst F.E."/>
            <person name="Fraser C.M."/>
        </authorList>
    </citation>
    <scope>NUCLEOTIDE SEQUENCE [LARGE SCALE GENOMIC DNA]</scope>
    <source>
        <strain evidence="5">ATCC BAA-308 / W83</strain>
    </source>
</reference>
<reference evidence="3" key="2">
    <citation type="journal article" date="2016" name="Microbiology">
        <title>Role of the Porphyromonas gingivalis iron-binding protein PG1777 in oxidative stress resistance.</title>
        <authorList>
            <person name="McKenzie R.M.E."/>
            <person name="Henry L.G."/>
            <person name="Boutrin M.C."/>
            <person name="Ximinies A."/>
            <person name="Fletcher H.M."/>
        </authorList>
    </citation>
    <scope>FUNCTION</scope>
    <scope>SUBUNIT</scope>
    <scope>INDUCTION BY HYDROGEN PEROXIDE</scope>
    <scope>DISRUPTION PHENOTYPE</scope>
</reference>
<evidence type="ECO:0000269" key="1">
    <source>
    </source>
</evidence>
<evidence type="ECO:0000303" key="2">
    <source>
    </source>
</evidence>
<evidence type="ECO:0000305" key="3"/>
<evidence type="ECO:0000312" key="4">
    <source>
        <dbReference type="EMBL" id="AAQ66778.1"/>
    </source>
</evidence>
<evidence type="ECO:0000312" key="5">
    <source>
        <dbReference type="Proteomes" id="UP000000588"/>
    </source>
</evidence>
<accession>Q7MTZ9</accession>
<feature type="chain" id="PRO_0000458857" description="Fe-S protein maturation auxiliary factor PG_1777">
    <location>
        <begin position="1"/>
        <end position="105"/>
    </location>
</feature>